<keyword id="KW-0030">Aminoacyl-tRNA synthetase</keyword>
<keyword id="KW-0067">ATP-binding</keyword>
<keyword id="KW-0963">Cytoplasm</keyword>
<keyword id="KW-0436">Ligase</keyword>
<keyword id="KW-0547">Nucleotide-binding</keyword>
<keyword id="KW-0648">Protein biosynthesis</keyword>
<keyword id="KW-1185">Reference proteome</keyword>
<comment type="function">
    <text evidence="1">Catalyzes the attachment of tryptophan to tRNA(Trp).</text>
</comment>
<comment type="catalytic activity">
    <reaction evidence="1">
        <text>tRNA(Trp) + L-tryptophan + ATP = L-tryptophyl-tRNA(Trp) + AMP + diphosphate + H(+)</text>
        <dbReference type="Rhea" id="RHEA:24080"/>
        <dbReference type="Rhea" id="RHEA-COMP:9671"/>
        <dbReference type="Rhea" id="RHEA-COMP:9705"/>
        <dbReference type="ChEBI" id="CHEBI:15378"/>
        <dbReference type="ChEBI" id="CHEBI:30616"/>
        <dbReference type="ChEBI" id="CHEBI:33019"/>
        <dbReference type="ChEBI" id="CHEBI:57912"/>
        <dbReference type="ChEBI" id="CHEBI:78442"/>
        <dbReference type="ChEBI" id="CHEBI:78535"/>
        <dbReference type="ChEBI" id="CHEBI:456215"/>
        <dbReference type="EC" id="6.1.1.2"/>
    </reaction>
</comment>
<comment type="subunit">
    <text evidence="1">Homodimer.</text>
</comment>
<comment type="subcellular location">
    <subcellularLocation>
        <location evidence="1">Cytoplasm</location>
    </subcellularLocation>
</comment>
<comment type="similarity">
    <text evidence="1">Belongs to the class-I aminoacyl-tRNA synthetase family.</text>
</comment>
<protein>
    <recommendedName>
        <fullName evidence="1">Tryptophan--tRNA ligase</fullName>
        <ecNumber evidence="1">6.1.1.2</ecNumber>
    </recommendedName>
    <alternativeName>
        <fullName evidence="1">Tryptophanyl-tRNA synthetase</fullName>
        <shortName evidence="1">TrpRS</shortName>
    </alternativeName>
</protein>
<sequence>MTKPIILTGDRPTGKLHIGHYVGSLKNRVLLQEEDKYDMFVFLADQQALTDHAKDPQTIVESIGNVALDYLAVGLDPNKSTIFIQSQIPELAELSMYYMNLVSLARLERNPTVKTEISQKGFGESIPTGFLVYPIAQAADITAFKANYVPVGTDQKPMIEQTREIVRSFNNAYNCDVLVEPEGIYPENERAGRLPGLDGNAKMSKSLNNGIYLADDADTLRKKVMSMYTDPDHIRVEDPGKIEGNMVFHYLDVFGRPEDAQEIADMKERYQRGGLGDVKTKRYLLEILERELGPIRERRIEFAKDMGEVYNMIQKGSERAREVAGQTLSEVKGAMGLHYFN</sequence>
<organism>
    <name type="scientific">Streptococcus pneumoniae serotype 4 (strain ATCC BAA-334 / TIGR4)</name>
    <dbReference type="NCBI Taxonomy" id="170187"/>
    <lineage>
        <taxon>Bacteria</taxon>
        <taxon>Bacillati</taxon>
        <taxon>Bacillota</taxon>
        <taxon>Bacilli</taxon>
        <taxon>Lactobacillales</taxon>
        <taxon>Streptococcaceae</taxon>
        <taxon>Streptococcus</taxon>
    </lineage>
</organism>
<dbReference type="EC" id="6.1.1.2" evidence="1"/>
<dbReference type="EMBL" id="AE005672">
    <property type="protein sequence ID" value="AAK76277.1"/>
    <property type="molecule type" value="Genomic_DNA"/>
</dbReference>
<dbReference type="PIR" id="D95260">
    <property type="entry name" value="D95260"/>
</dbReference>
<dbReference type="RefSeq" id="WP_000165444.1">
    <property type="nucleotide sequence ID" value="NZ_CP155539.1"/>
</dbReference>
<dbReference type="SMR" id="P67595"/>
<dbReference type="PaxDb" id="170187-SP_2229"/>
<dbReference type="EnsemblBacteria" id="AAK76277">
    <property type="protein sequence ID" value="AAK76277"/>
    <property type="gene ID" value="SP_2229"/>
</dbReference>
<dbReference type="GeneID" id="45652551"/>
<dbReference type="KEGG" id="spn:SP_2229"/>
<dbReference type="eggNOG" id="COG0180">
    <property type="taxonomic scope" value="Bacteria"/>
</dbReference>
<dbReference type="PhylomeDB" id="P67595"/>
<dbReference type="BioCyc" id="SPNE170187:G1FZB-2329-MONOMER"/>
<dbReference type="Proteomes" id="UP000000585">
    <property type="component" value="Chromosome"/>
</dbReference>
<dbReference type="GO" id="GO:0005829">
    <property type="term" value="C:cytosol"/>
    <property type="evidence" value="ECO:0007669"/>
    <property type="project" value="TreeGrafter"/>
</dbReference>
<dbReference type="GO" id="GO:0005524">
    <property type="term" value="F:ATP binding"/>
    <property type="evidence" value="ECO:0007669"/>
    <property type="project" value="UniProtKB-UniRule"/>
</dbReference>
<dbReference type="GO" id="GO:0004830">
    <property type="term" value="F:tryptophan-tRNA ligase activity"/>
    <property type="evidence" value="ECO:0007669"/>
    <property type="project" value="UniProtKB-UniRule"/>
</dbReference>
<dbReference type="GO" id="GO:0006436">
    <property type="term" value="P:tryptophanyl-tRNA aminoacylation"/>
    <property type="evidence" value="ECO:0007669"/>
    <property type="project" value="UniProtKB-UniRule"/>
</dbReference>
<dbReference type="CDD" id="cd00806">
    <property type="entry name" value="TrpRS_core"/>
    <property type="match status" value="1"/>
</dbReference>
<dbReference type="FunFam" id="1.10.240.10:FF:000005">
    <property type="entry name" value="Tryptophan--tRNA ligase"/>
    <property type="match status" value="1"/>
</dbReference>
<dbReference type="FunFam" id="3.40.50.620:FF:000094">
    <property type="entry name" value="Tryptophan--tRNA ligase"/>
    <property type="match status" value="1"/>
</dbReference>
<dbReference type="Gene3D" id="3.40.50.620">
    <property type="entry name" value="HUPs"/>
    <property type="match status" value="1"/>
</dbReference>
<dbReference type="Gene3D" id="1.10.240.10">
    <property type="entry name" value="Tyrosyl-Transfer RNA Synthetase"/>
    <property type="match status" value="1"/>
</dbReference>
<dbReference type="HAMAP" id="MF_00140_B">
    <property type="entry name" value="Trp_tRNA_synth_B"/>
    <property type="match status" value="1"/>
</dbReference>
<dbReference type="InterPro" id="IPR001412">
    <property type="entry name" value="aa-tRNA-synth_I_CS"/>
</dbReference>
<dbReference type="InterPro" id="IPR002305">
    <property type="entry name" value="aa-tRNA-synth_Ic"/>
</dbReference>
<dbReference type="InterPro" id="IPR014729">
    <property type="entry name" value="Rossmann-like_a/b/a_fold"/>
</dbReference>
<dbReference type="InterPro" id="IPR002306">
    <property type="entry name" value="Trp-tRNA-ligase"/>
</dbReference>
<dbReference type="InterPro" id="IPR024109">
    <property type="entry name" value="Trp-tRNA-ligase_bac-type"/>
</dbReference>
<dbReference type="InterPro" id="IPR050203">
    <property type="entry name" value="Trp-tRNA_synthetase"/>
</dbReference>
<dbReference type="NCBIfam" id="TIGR00233">
    <property type="entry name" value="trpS"/>
    <property type="match status" value="1"/>
</dbReference>
<dbReference type="PANTHER" id="PTHR43766">
    <property type="entry name" value="TRYPTOPHAN--TRNA LIGASE, MITOCHONDRIAL"/>
    <property type="match status" value="1"/>
</dbReference>
<dbReference type="PANTHER" id="PTHR43766:SF1">
    <property type="entry name" value="TRYPTOPHAN--TRNA LIGASE, MITOCHONDRIAL"/>
    <property type="match status" value="1"/>
</dbReference>
<dbReference type="Pfam" id="PF00579">
    <property type="entry name" value="tRNA-synt_1b"/>
    <property type="match status" value="1"/>
</dbReference>
<dbReference type="PRINTS" id="PR01039">
    <property type="entry name" value="TRNASYNTHTRP"/>
</dbReference>
<dbReference type="SUPFAM" id="SSF52374">
    <property type="entry name" value="Nucleotidylyl transferase"/>
    <property type="match status" value="1"/>
</dbReference>
<dbReference type="PROSITE" id="PS00178">
    <property type="entry name" value="AA_TRNA_LIGASE_I"/>
    <property type="match status" value="1"/>
</dbReference>
<accession>P67595</accession>
<accession>Q97N42</accession>
<evidence type="ECO:0000255" key="1">
    <source>
        <dbReference type="HAMAP-Rule" id="MF_00140"/>
    </source>
</evidence>
<name>SYW_STRPN</name>
<reference key="1">
    <citation type="journal article" date="2001" name="Science">
        <title>Complete genome sequence of a virulent isolate of Streptococcus pneumoniae.</title>
        <authorList>
            <person name="Tettelin H."/>
            <person name="Nelson K.E."/>
            <person name="Paulsen I.T."/>
            <person name="Eisen J.A."/>
            <person name="Read T.D."/>
            <person name="Peterson S.N."/>
            <person name="Heidelberg J.F."/>
            <person name="DeBoy R.T."/>
            <person name="Haft D.H."/>
            <person name="Dodson R.J."/>
            <person name="Durkin A.S."/>
            <person name="Gwinn M.L."/>
            <person name="Kolonay J.F."/>
            <person name="Nelson W.C."/>
            <person name="Peterson J.D."/>
            <person name="Umayam L.A."/>
            <person name="White O."/>
            <person name="Salzberg S.L."/>
            <person name="Lewis M.R."/>
            <person name="Radune D."/>
            <person name="Holtzapple E.K."/>
            <person name="Khouri H.M."/>
            <person name="Wolf A.M."/>
            <person name="Utterback T.R."/>
            <person name="Hansen C.L."/>
            <person name="McDonald L.A."/>
            <person name="Feldblyum T.V."/>
            <person name="Angiuoli S.V."/>
            <person name="Dickinson T."/>
            <person name="Hickey E.K."/>
            <person name="Holt I.E."/>
            <person name="Loftus B.J."/>
            <person name="Yang F."/>
            <person name="Smith H.O."/>
            <person name="Venter J.C."/>
            <person name="Dougherty B.A."/>
            <person name="Morrison D.A."/>
            <person name="Hollingshead S.K."/>
            <person name="Fraser C.M."/>
        </authorList>
    </citation>
    <scope>NUCLEOTIDE SEQUENCE [LARGE SCALE GENOMIC DNA]</scope>
    <source>
        <strain>ATCC BAA-334 / TIGR4</strain>
    </source>
</reference>
<proteinExistence type="inferred from homology"/>
<gene>
    <name evidence="1" type="primary">trpS</name>
    <name type="ordered locus">SP_2229</name>
</gene>
<feature type="chain" id="PRO_0000136690" description="Tryptophan--tRNA ligase">
    <location>
        <begin position="1"/>
        <end position="341"/>
    </location>
</feature>
<feature type="short sequence motif" description="'HIGH' region" evidence="1">
    <location>
        <begin position="12"/>
        <end position="20"/>
    </location>
</feature>
<feature type="short sequence motif" description="'KMSKS' region" evidence="1">
    <location>
        <begin position="202"/>
        <end position="206"/>
    </location>
</feature>
<feature type="binding site" evidence="1">
    <location>
        <begin position="11"/>
        <end position="13"/>
    </location>
    <ligand>
        <name>ATP</name>
        <dbReference type="ChEBI" id="CHEBI:30616"/>
    </ligand>
</feature>
<feature type="binding site" evidence="1">
    <location>
        <begin position="19"/>
        <end position="20"/>
    </location>
    <ligand>
        <name>ATP</name>
        <dbReference type="ChEBI" id="CHEBI:30616"/>
    </ligand>
</feature>
<feature type="binding site" evidence="1">
    <location>
        <position position="140"/>
    </location>
    <ligand>
        <name>L-tryptophan</name>
        <dbReference type="ChEBI" id="CHEBI:57912"/>
    </ligand>
</feature>
<feature type="binding site" evidence="1">
    <location>
        <begin position="152"/>
        <end position="154"/>
    </location>
    <ligand>
        <name>ATP</name>
        <dbReference type="ChEBI" id="CHEBI:30616"/>
    </ligand>
</feature>
<feature type="binding site" evidence="1">
    <location>
        <position position="194"/>
    </location>
    <ligand>
        <name>ATP</name>
        <dbReference type="ChEBI" id="CHEBI:30616"/>
    </ligand>
</feature>
<feature type="binding site" evidence="1">
    <location>
        <begin position="202"/>
        <end position="206"/>
    </location>
    <ligand>
        <name>ATP</name>
        <dbReference type="ChEBI" id="CHEBI:30616"/>
    </ligand>
</feature>